<feature type="chain" id="PRO_0000218137" description="UPF0339 protein YegP">
    <location>
        <begin position="1"/>
        <end position="110"/>
    </location>
</feature>
<feature type="repeat" description="1">
    <location>
        <begin position="10"/>
        <end position="58"/>
    </location>
</feature>
<feature type="repeat" description="2">
    <location>
        <begin position="61"/>
        <end position="109"/>
    </location>
</feature>
<protein>
    <recommendedName>
        <fullName>UPF0339 protein YegP</fullName>
    </recommendedName>
</protein>
<dbReference type="EMBL" id="AE014075">
    <property type="protein sequence ID" value="AAN81062.1"/>
    <property type="status" value="ALT_INIT"/>
    <property type="molecule type" value="Genomic_DNA"/>
</dbReference>
<dbReference type="RefSeq" id="WP_001300972.1">
    <property type="nucleotide sequence ID" value="NZ_CP051263.1"/>
</dbReference>
<dbReference type="BMRB" id="Q8FG00"/>
<dbReference type="SMR" id="Q8FG00"/>
<dbReference type="STRING" id="199310.c2606"/>
<dbReference type="KEGG" id="ecc:c2606"/>
<dbReference type="eggNOG" id="COG3422">
    <property type="taxonomic scope" value="Bacteria"/>
</dbReference>
<dbReference type="HOGENOM" id="CLU_163886_0_0_6"/>
<dbReference type="Proteomes" id="UP000001410">
    <property type="component" value="Chromosome"/>
</dbReference>
<dbReference type="FunFam" id="2.30.29.80:FF:000001">
    <property type="entry name" value="DUF1508 domain-containing protein"/>
    <property type="match status" value="1"/>
</dbReference>
<dbReference type="Gene3D" id="2.30.29.80">
    <property type="match status" value="1"/>
</dbReference>
<dbReference type="InterPro" id="IPR010879">
    <property type="entry name" value="DUF1508"/>
</dbReference>
<dbReference type="InterPro" id="IPR051141">
    <property type="entry name" value="UPF0339_domain"/>
</dbReference>
<dbReference type="InterPro" id="IPR036913">
    <property type="entry name" value="YegP-like_sf"/>
</dbReference>
<dbReference type="PANTHER" id="PTHR40606">
    <property type="match status" value="1"/>
</dbReference>
<dbReference type="PANTHER" id="PTHR40606:SF1">
    <property type="entry name" value="UPF0339 PROTEIN YEGP"/>
    <property type="match status" value="1"/>
</dbReference>
<dbReference type="Pfam" id="PF07411">
    <property type="entry name" value="DUF1508"/>
    <property type="match status" value="2"/>
</dbReference>
<dbReference type="SUPFAM" id="SSF160113">
    <property type="entry name" value="YegP-like"/>
    <property type="match status" value="2"/>
</dbReference>
<gene>
    <name type="primary">yegP</name>
    <name type="ordered locus">c2606</name>
</gene>
<keyword id="KW-1185">Reference proteome</keyword>
<keyword id="KW-0677">Repeat</keyword>
<reference key="1">
    <citation type="journal article" date="2002" name="Proc. Natl. Acad. Sci. U.S.A.">
        <title>Extensive mosaic structure revealed by the complete genome sequence of uropathogenic Escherichia coli.</title>
        <authorList>
            <person name="Welch R.A."/>
            <person name="Burland V."/>
            <person name="Plunkett G. III"/>
            <person name="Redford P."/>
            <person name="Roesch P."/>
            <person name="Rasko D."/>
            <person name="Buckles E.L."/>
            <person name="Liou S.-R."/>
            <person name="Boutin A."/>
            <person name="Hackett J."/>
            <person name="Stroud D."/>
            <person name="Mayhew G.F."/>
            <person name="Rose D.J."/>
            <person name="Zhou S."/>
            <person name="Schwartz D.C."/>
            <person name="Perna N.T."/>
            <person name="Mobley H.L.T."/>
            <person name="Donnenberg M.S."/>
            <person name="Blattner F.R."/>
        </authorList>
    </citation>
    <scope>NUCLEOTIDE SEQUENCE [LARGE SCALE GENOMIC DNA]</scope>
    <source>
        <strain>CFT073 / ATCC 700928 / UPEC</strain>
    </source>
</reference>
<organism>
    <name type="scientific">Escherichia coli O6:H1 (strain CFT073 / ATCC 700928 / UPEC)</name>
    <dbReference type="NCBI Taxonomy" id="199310"/>
    <lineage>
        <taxon>Bacteria</taxon>
        <taxon>Pseudomonadati</taxon>
        <taxon>Pseudomonadota</taxon>
        <taxon>Gammaproteobacteria</taxon>
        <taxon>Enterobacterales</taxon>
        <taxon>Enterobacteriaceae</taxon>
        <taxon>Escherichia</taxon>
    </lineage>
</organism>
<accession>Q8FG00</accession>
<sequence>MAGWFELSKSSDNQFRFVLKAGNGETILTSELYTSKASAEKGIASVRSNSPQEERYEKKTASNGKFYFNLKAANHQIIGSSQMYATAQSRETGIASVKVNGTSQTVKDNT</sequence>
<evidence type="ECO:0000305" key="1"/>
<comment type="similarity">
    <text evidence="1">Belongs to the UPF0339 family. Duplicated subfamily.</text>
</comment>
<comment type="sequence caution" evidence="1">
    <conflict type="erroneous initiation">
        <sequence resource="EMBL-CDS" id="AAN81062"/>
    </conflict>
</comment>
<name>YEGP_ECOL6</name>
<proteinExistence type="inferred from homology"/>